<protein>
    <recommendedName>
        <fullName>Polyserase-2</fullName>
        <ecNumber>3.4.21.-</ecNumber>
    </recommendedName>
    <alternativeName>
        <fullName>Polyserine protease 2</fullName>
    </alternativeName>
    <alternativeName>
        <fullName>Serine protease 36</fullName>
    </alternativeName>
</protein>
<proteinExistence type="evidence at transcript level"/>
<organism>
    <name type="scientific">Rattus norvegicus</name>
    <name type="common">Rat</name>
    <dbReference type="NCBI Taxonomy" id="10116"/>
    <lineage>
        <taxon>Eukaryota</taxon>
        <taxon>Metazoa</taxon>
        <taxon>Chordata</taxon>
        <taxon>Craniata</taxon>
        <taxon>Vertebrata</taxon>
        <taxon>Euteleostomi</taxon>
        <taxon>Mammalia</taxon>
        <taxon>Eutheria</taxon>
        <taxon>Euarchontoglires</taxon>
        <taxon>Glires</taxon>
        <taxon>Rodentia</taxon>
        <taxon>Myomorpha</taxon>
        <taxon>Muroidea</taxon>
        <taxon>Muridae</taxon>
        <taxon>Murinae</taxon>
        <taxon>Rattus</taxon>
    </lineage>
</organism>
<sequence length="875" mass="94483">MSHHLFLPVVIMVVSPIPPGAFQDSVVSPTQGEFEDLDCGDCGRPEPSSRIVGGSDAHPGTWPWQVSLHQGGGHICGGSLIAPSWVLSAAHCFVTNGTLEPADELSVLLGVHSQDGPLEGAHMRSVATILIPDNYSTVELGADLALLRLASPAKLGPSVRGADLALLRLASPAKLGPSVRPVCLPRASHLFAHGTACWATGWGDVQEAVPLPLPWVLQEVELRLLGEAACQCLYSRPGPFNLTFQLLPGMLCAGYPAGRRDTCQGDSGGPLVCEDGGRWFLAGITSFGFGCGRRNRPGVFTAVAPYESWIREHVMGSEPGPVFPSQLQKPQSGPWEPREENCTFAQPECGKAPRPGTWPWEAQVTVPGSTPCYGALVSDRWVLAPASCFLDSPHDFETWRVLLPSRPEEERVARLVAHENASRDFASDLALLQLRTRVNLTAAPSAVCLPHHEHYFLPGSHCRLARWGRGELAPGSSAQLEAQLLNGWWCHCLYGRQGETVPRPGDPPHLLCPAYQEEEEAGLCWVDSSWSLLCREEGTWFLAGYRTLSDGCLRPRAFSPMQTHGPWIRHVTQGAYLEDQLTWDWGPEGEETEKQTCPTHTEHGACGLRPKSTPAGVLWPWLTEVHVTGDRVCTGILVAPGWVLAATHCILRLGSTTVPYIEVYLGRAGVSSLPQGHQVSRSVVSIRLPRHLGLRPPLALLELNSRVEPSPSALPICLHPGGIPSGASCWVLGWKNPQDRVPVVAAVSILTPRLCHCLYPGILTPGTFCVLYSEGQEDRCEVTSAPPLLCQTEEGPWVLVGMAVRGNRELFAAIGPEATWISQTVGEAHFLHLGGSSYWSPEGSDLCPQDLAGSASSPKVTALLLLLLLAPLIPR</sequence>
<keyword id="KW-1015">Disulfide bond</keyword>
<keyword id="KW-0272">Extracellular matrix</keyword>
<keyword id="KW-0325">Glycoprotein</keyword>
<keyword id="KW-0378">Hydrolase</keyword>
<keyword id="KW-0645">Protease</keyword>
<keyword id="KW-1185">Reference proteome</keyword>
<keyword id="KW-0677">Repeat</keyword>
<keyword id="KW-0964">Secreted</keyword>
<keyword id="KW-0720">Serine protease</keyword>
<keyword id="KW-0732">Signal</keyword>
<keyword id="KW-0865">Zymogen</keyword>
<dbReference type="EC" id="3.4.21.-"/>
<dbReference type="EMBL" id="AJ784938">
    <property type="protein sequence ID" value="CAH05009.1"/>
    <property type="molecule type" value="mRNA"/>
</dbReference>
<dbReference type="SMR" id="Q5K2P9"/>
<dbReference type="FunCoup" id="Q5K2P9">
    <property type="interactions" value="41"/>
</dbReference>
<dbReference type="STRING" id="10116.ENSRNOP00000026587"/>
<dbReference type="MEROPS" id="S01.414"/>
<dbReference type="GlyCosmos" id="Q5K2P9">
    <property type="glycosylation" value="6 sites, No reported glycans"/>
</dbReference>
<dbReference type="GlyGen" id="Q5K2P9">
    <property type="glycosylation" value="8 sites"/>
</dbReference>
<dbReference type="UCSC" id="RGD:1593186">
    <property type="organism name" value="rat"/>
</dbReference>
<dbReference type="AGR" id="RGD:1593186"/>
<dbReference type="RGD" id="1593186">
    <property type="gene designation" value="Prss36"/>
</dbReference>
<dbReference type="InParanoid" id="Q5K2P9"/>
<dbReference type="PhylomeDB" id="Q5K2P9"/>
<dbReference type="PRO" id="PR:Q5K2P9"/>
<dbReference type="Proteomes" id="UP000002494">
    <property type="component" value="Unplaced"/>
</dbReference>
<dbReference type="GO" id="GO:0005737">
    <property type="term" value="C:cytoplasm"/>
    <property type="evidence" value="ECO:0000266"/>
    <property type="project" value="RGD"/>
</dbReference>
<dbReference type="GO" id="GO:0005576">
    <property type="term" value="C:extracellular region"/>
    <property type="evidence" value="ECO:0007669"/>
    <property type="project" value="UniProtKB-KW"/>
</dbReference>
<dbReference type="GO" id="GO:0004252">
    <property type="term" value="F:serine-type endopeptidase activity"/>
    <property type="evidence" value="ECO:0000266"/>
    <property type="project" value="RGD"/>
</dbReference>
<dbReference type="GO" id="GO:0006508">
    <property type="term" value="P:proteolysis"/>
    <property type="evidence" value="ECO:0007669"/>
    <property type="project" value="UniProtKB-KW"/>
</dbReference>
<dbReference type="CDD" id="cd00190">
    <property type="entry name" value="Tryp_SPc"/>
    <property type="match status" value="1"/>
</dbReference>
<dbReference type="FunFam" id="2.40.10.10:FF:000044">
    <property type="entry name" value="polyserase-2 isoform X1"/>
    <property type="match status" value="2"/>
</dbReference>
<dbReference type="FunFam" id="2.40.10.10:FF:000024">
    <property type="entry name" value="Serine protease 53"/>
    <property type="match status" value="1"/>
</dbReference>
<dbReference type="FunFam" id="2.40.10.10:FF:000068">
    <property type="entry name" value="transmembrane protease serine 2"/>
    <property type="match status" value="1"/>
</dbReference>
<dbReference type="Gene3D" id="2.40.10.10">
    <property type="entry name" value="Trypsin-like serine proteases"/>
    <property type="match status" value="4"/>
</dbReference>
<dbReference type="InterPro" id="IPR017326">
    <property type="entry name" value="Pept_S1A_polyserase-2"/>
</dbReference>
<dbReference type="InterPro" id="IPR009003">
    <property type="entry name" value="Peptidase_S1_PA"/>
</dbReference>
<dbReference type="InterPro" id="IPR043504">
    <property type="entry name" value="Peptidase_S1_PA_chymotrypsin"/>
</dbReference>
<dbReference type="InterPro" id="IPR001314">
    <property type="entry name" value="Peptidase_S1A"/>
</dbReference>
<dbReference type="InterPro" id="IPR001254">
    <property type="entry name" value="Trypsin_dom"/>
</dbReference>
<dbReference type="InterPro" id="IPR018114">
    <property type="entry name" value="TRYPSIN_HIS"/>
</dbReference>
<dbReference type="InterPro" id="IPR033116">
    <property type="entry name" value="TRYPSIN_SER"/>
</dbReference>
<dbReference type="PANTHER" id="PTHR24253:SF100">
    <property type="entry name" value="POLYSERASE-2"/>
    <property type="match status" value="1"/>
</dbReference>
<dbReference type="PANTHER" id="PTHR24253">
    <property type="entry name" value="TRANSMEMBRANE PROTEASE SERINE"/>
    <property type="match status" value="1"/>
</dbReference>
<dbReference type="Pfam" id="PF00089">
    <property type="entry name" value="Trypsin"/>
    <property type="match status" value="3"/>
</dbReference>
<dbReference type="PIRSF" id="PIRSF037933">
    <property type="entry name" value="Polyserase-2"/>
    <property type="match status" value="1"/>
</dbReference>
<dbReference type="PRINTS" id="PR00722">
    <property type="entry name" value="CHYMOTRYPSIN"/>
</dbReference>
<dbReference type="SMART" id="SM00020">
    <property type="entry name" value="Tryp_SPc"/>
    <property type="match status" value="1"/>
</dbReference>
<dbReference type="SUPFAM" id="SSF50494">
    <property type="entry name" value="Trypsin-like serine proteases"/>
    <property type="match status" value="3"/>
</dbReference>
<dbReference type="PROSITE" id="PS50240">
    <property type="entry name" value="TRYPSIN_DOM"/>
    <property type="match status" value="3"/>
</dbReference>
<dbReference type="PROSITE" id="PS00134">
    <property type="entry name" value="TRYPSIN_HIS"/>
    <property type="match status" value="1"/>
</dbReference>
<dbReference type="PROSITE" id="PS00135">
    <property type="entry name" value="TRYPSIN_SER"/>
    <property type="match status" value="1"/>
</dbReference>
<reference key="1">
    <citation type="journal article" date="2005" name="J. Biol. Chem.">
        <title>Human polyserase-2, a novel enzyme with three tandem serine protease domains in a single polypeptide chain.</title>
        <authorList>
            <person name="Cal S."/>
            <person name="Quesada V."/>
            <person name="Llamazares M."/>
            <person name="Diaz-Perales A."/>
            <person name="Garabaya C."/>
            <person name="Lopez-Otin C."/>
        </authorList>
    </citation>
    <scope>NUCLEOTIDE SEQUENCE [MRNA]</scope>
    <source>
        <tissue>Liver</tissue>
    </source>
</reference>
<gene>
    <name type="primary">Prss36</name>
</gene>
<feature type="signal peptide" evidence="2">
    <location>
        <begin position="1"/>
        <end position="23"/>
    </location>
</feature>
<feature type="propeptide" id="PRO_0000027883" evidence="2">
    <location>
        <begin position="24"/>
        <end position="50"/>
    </location>
</feature>
<feature type="chain" id="PRO_0000027884" description="Polyserase-2">
    <location>
        <begin position="51"/>
        <end position="875"/>
    </location>
</feature>
<feature type="domain" description="Peptidase S1 1" evidence="3">
    <location>
        <begin position="51"/>
        <end position="315"/>
    </location>
</feature>
<feature type="domain" description="Peptidase S1 2" evidence="3">
    <location>
        <begin position="347"/>
        <end position="573"/>
    </location>
</feature>
<feature type="domain" description="Peptidase S1 3" evidence="3">
    <location>
        <begin position="608"/>
        <end position="826"/>
    </location>
</feature>
<feature type="region of interest" description="Disordered" evidence="4">
    <location>
        <begin position="320"/>
        <end position="340"/>
    </location>
</feature>
<feature type="active site" description="Charge relay system" evidence="1">
    <location>
        <position position="91"/>
    </location>
</feature>
<feature type="active site" description="Charge relay system" evidence="1">
    <location>
        <position position="163"/>
    </location>
</feature>
<feature type="active site" description="Charge relay system" evidence="1">
    <location>
        <position position="267"/>
    </location>
</feature>
<feature type="glycosylation site" description="N-linked (GlcNAc...) asparagine" evidence="2">
    <location>
        <position position="96"/>
    </location>
</feature>
<feature type="glycosylation site" description="N-linked (GlcNAc...) asparagine" evidence="2">
    <location>
        <position position="134"/>
    </location>
</feature>
<feature type="glycosylation site" description="N-linked (GlcNAc...) asparagine" evidence="2">
    <location>
        <position position="241"/>
    </location>
</feature>
<feature type="glycosylation site" description="N-linked (GlcNAc...) asparagine" evidence="2">
    <location>
        <position position="341"/>
    </location>
</feature>
<feature type="glycosylation site" description="N-linked (GlcNAc...) asparagine" evidence="2">
    <location>
        <position position="420"/>
    </location>
</feature>
<feature type="glycosylation site" description="N-linked (GlcNAc...) asparagine" evidence="2">
    <location>
        <position position="439"/>
    </location>
</feature>
<feature type="disulfide bond" evidence="3">
    <location>
        <begin position="76"/>
        <end position="92"/>
    </location>
</feature>
<feature type="disulfide bond" evidence="3">
    <location>
        <begin position="197"/>
        <end position="273"/>
    </location>
</feature>
<feature type="disulfide bond" evidence="3">
    <location>
        <begin position="230"/>
        <end position="252"/>
    </location>
</feature>
<feature type="disulfide bond" evidence="3">
    <location>
        <begin position="263"/>
        <end position="291"/>
    </location>
</feature>
<feature type="disulfide bond" evidence="3">
    <location>
        <begin position="372"/>
        <end position="388"/>
    </location>
</feature>
<feature type="disulfide bond" evidence="3">
    <location>
        <begin position="462"/>
        <end position="534"/>
    </location>
</feature>
<feature type="disulfide bond" evidence="3">
    <location>
        <begin position="490"/>
        <end position="512"/>
    </location>
</feature>
<feature type="disulfide bond" evidence="3">
    <location>
        <begin position="524"/>
        <end position="552"/>
    </location>
</feature>
<feature type="disulfide bond" evidence="3">
    <location>
        <begin position="633"/>
        <end position="649"/>
    </location>
</feature>
<feature type="disulfide bond" evidence="3">
    <location>
        <begin position="729"/>
        <end position="790"/>
    </location>
</feature>
<feature type="disulfide bond" evidence="3">
    <location>
        <begin position="757"/>
        <end position="769"/>
    </location>
</feature>
<comment type="function">
    <text evidence="1">Serine protease. Hydrolyzes the peptides N-t-Boc-Gln-Ala-Arg-AMC and N-t-Boc-Gln-Gly-Arg-AMC and, to a lesser extent, N-t-Boc-Ala-Phe-Lys-AMC and N-t-Boc-Val-Leu-Lys-AMC. Has a preference for substrates with an Arg instead of a Lys residue in position P1 (By similarity).</text>
</comment>
<comment type="activity regulation">
    <text>Inhibited by serine proteinase inhibitor 4-(2-aminoethyl)-benzenesulfonyl fluoride, but not with EDTA or E-64.</text>
</comment>
<comment type="subcellular location">
    <subcellularLocation>
        <location evidence="1">Secreted</location>
        <location evidence="1">Extracellular space</location>
        <location evidence="1">Extracellular matrix</location>
    </subcellularLocation>
    <text evidence="1">Not attached to membranes.</text>
</comment>
<comment type="domain">
    <text>The first serine protease domain is catalytically active, whereas the second domain lacks the essential His residue of the catalytic triad at position 387, and the third domain lacks the essential Asp residue of the catalytic triad at position 697. The second and third domains are therefore predicted to be inactive.</text>
</comment>
<comment type="PTM">
    <text evidence="1">The 3 protease domains are not proteolytically cleaved.</text>
</comment>
<comment type="similarity">
    <text evidence="3">Belongs to the peptidase S1 family.</text>
</comment>
<accession>Q5K2P9</accession>
<name>POLS2_RAT</name>
<evidence type="ECO:0000250" key="1"/>
<evidence type="ECO:0000255" key="2"/>
<evidence type="ECO:0000255" key="3">
    <source>
        <dbReference type="PROSITE-ProRule" id="PRU00274"/>
    </source>
</evidence>
<evidence type="ECO:0000256" key="4">
    <source>
        <dbReference type="SAM" id="MobiDB-lite"/>
    </source>
</evidence>